<gene>
    <name type="primary">Hoxa4</name>
    <name type="synonym">Hox-1.4</name>
    <name type="synonym">Hoxa-4</name>
</gene>
<organism>
    <name type="scientific">Mus musculus</name>
    <name type="common">Mouse</name>
    <dbReference type="NCBI Taxonomy" id="10090"/>
    <lineage>
        <taxon>Eukaryota</taxon>
        <taxon>Metazoa</taxon>
        <taxon>Chordata</taxon>
        <taxon>Craniata</taxon>
        <taxon>Vertebrata</taxon>
        <taxon>Euteleostomi</taxon>
        <taxon>Mammalia</taxon>
        <taxon>Eutheria</taxon>
        <taxon>Euarchontoglires</taxon>
        <taxon>Glires</taxon>
        <taxon>Rodentia</taxon>
        <taxon>Myomorpha</taxon>
        <taxon>Muroidea</taxon>
        <taxon>Muridae</taxon>
        <taxon>Murinae</taxon>
        <taxon>Mus</taxon>
        <taxon>Mus</taxon>
    </lineage>
</organism>
<protein>
    <recommendedName>
        <fullName>Homeobox protein Hox-A4</fullName>
    </recommendedName>
    <alternativeName>
        <fullName>Homeobox protein Hox-1.4</fullName>
    </alternativeName>
    <alternativeName>
        <fullName>Homeobox protein MH-3</fullName>
    </alternativeName>
</protein>
<sequence length="285" mass="30468">MTMSSFLINSNYIEPKFPPFEEFAPHGGPGGGDGAVGGGPGYPRPQSAPHLPAPNPHAARQPPAYYAPRAREPSYPGGLYPAPAAACPYACRGASPGRPEQSPAPGAHPSPAPQPPVPLGHCAPGPTTPAVATGGSAPACPLLLADQGPAGPKGKEPVVYPWMKKIHVSAVNSSYNGGEPKRSRTAYTRQQVLELEKEFHFNRYLTRRRRIEIAHTLCLSERQVKIWFQNRRMKWKKDHKLPNTKMRSSNTASAPAGPPGKAQTHSPHHHPHPLPGASTPIPSSI</sequence>
<reference key="1">
    <citation type="journal article" date="1993" name="Cell. Mol. Biol. Res.">
        <title>Multiple levels of regulation exist for expression of the Hoxa-4 (Hox-1.4) gene in the mouse testis.</title>
        <authorList>
            <person name="Viviano C.M."/>
            <person name="Galliot B."/>
            <person name="Wolgemuth D.J."/>
        </authorList>
    </citation>
    <scope>NUCLEOTIDE SEQUENCE [GENOMIC DNA]</scope>
</reference>
<reference key="2">
    <citation type="journal article" date="1993" name="J. Cell. Biochem.">
        <title>Protein product of the somatic-type transcript of the Hoxa-4 (Hox-1.4) gene binds to homeobox consensus binding sites in its promoter and intron.</title>
        <authorList>
            <person name="Wu K."/>
            <person name="Wolgemuth D.J."/>
        </authorList>
    </citation>
    <scope>NUCLEOTIDE SEQUENCE [GENOMIC DNA]</scope>
</reference>
<reference key="3">
    <citation type="journal article" date="2005" name="Science">
        <title>The transcriptional landscape of the mammalian genome.</title>
        <authorList>
            <person name="Carninci P."/>
            <person name="Kasukawa T."/>
            <person name="Katayama S."/>
            <person name="Gough J."/>
            <person name="Frith M.C."/>
            <person name="Maeda N."/>
            <person name="Oyama R."/>
            <person name="Ravasi T."/>
            <person name="Lenhard B."/>
            <person name="Wells C."/>
            <person name="Kodzius R."/>
            <person name="Shimokawa K."/>
            <person name="Bajic V.B."/>
            <person name="Brenner S.E."/>
            <person name="Batalov S."/>
            <person name="Forrest A.R."/>
            <person name="Zavolan M."/>
            <person name="Davis M.J."/>
            <person name="Wilming L.G."/>
            <person name="Aidinis V."/>
            <person name="Allen J.E."/>
            <person name="Ambesi-Impiombato A."/>
            <person name="Apweiler R."/>
            <person name="Aturaliya R.N."/>
            <person name="Bailey T.L."/>
            <person name="Bansal M."/>
            <person name="Baxter L."/>
            <person name="Beisel K.W."/>
            <person name="Bersano T."/>
            <person name="Bono H."/>
            <person name="Chalk A.M."/>
            <person name="Chiu K.P."/>
            <person name="Choudhary V."/>
            <person name="Christoffels A."/>
            <person name="Clutterbuck D.R."/>
            <person name="Crowe M.L."/>
            <person name="Dalla E."/>
            <person name="Dalrymple B.P."/>
            <person name="de Bono B."/>
            <person name="Della Gatta G."/>
            <person name="di Bernardo D."/>
            <person name="Down T."/>
            <person name="Engstrom P."/>
            <person name="Fagiolini M."/>
            <person name="Faulkner G."/>
            <person name="Fletcher C.F."/>
            <person name="Fukushima T."/>
            <person name="Furuno M."/>
            <person name="Futaki S."/>
            <person name="Gariboldi M."/>
            <person name="Georgii-Hemming P."/>
            <person name="Gingeras T.R."/>
            <person name="Gojobori T."/>
            <person name="Green R.E."/>
            <person name="Gustincich S."/>
            <person name="Harbers M."/>
            <person name="Hayashi Y."/>
            <person name="Hensch T.K."/>
            <person name="Hirokawa N."/>
            <person name="Hill D."/>
            <person name="Huminiecki L."/>
            <person name="Iacono M."/>
            <person name="Ikeo K."/>
            <person name="Iwama A."/>
            <person name="Ishikawa T."/>
            <person name="Jakt M."/>
            <person name="Kanapin A."/>
            <person name="Katoh M."/>
            <person name="Kawasawa Y."/>
            <person name="Kelso J."/>
            <person name="Kitamura H."/>
            <person name="Kitano H."/>
            <person name="Kollias G."/>
            <person name="Krishnan S.P."/>
            <person name="Kruger A."/>
            <person name="Kummerfeld S.K."/>
            <person name="Kurochkin I.V."/>
            <person name="Lareau L.F."/>
            <person name="Lazarevic D."/>
            <person name="Lipovich L."/>
            <person name="Liu J."/>
            <person name="Liuni S."/>
            <person name="McWilliam S."/>
            <person name="Madan Babu M."/>
            <person name="Madera M."/>
            <person name="Marchionni L."/>
            <person name="Matsuda H."/>
            <person name="Matsuzawa S."/>
            <person name="Miki H."/>
            <person name="Mignone F."/>
            <person name="Miyake S."/>
            <person name="Morris K."/>
            <person name="Mottagui-Tabar S."/>
            <person name="Mulder N."/>
            <person name="Nakano N."/>
            <person name="Nakauchi H."/>
            <person name="Ng P."/>
            <person name="Nilsson R."/>
            <person name="Nishiguchi S."/>
            <person name="Nishikawa S."/>
            <person name="Nori F."/>
            <person name="Ohara O."/>
            <person name="Okazaki Y."/>
            <person name="Orlando V."/>
            <person name="Pang K.C."/>
            <person name="Pavan W.J."/>
            <person name="Pavesi G."/>
            <person name="Pesole G."/>
            <person name="Petrovsky N."/>
            <person name="Piazza S."/>
            <person name="Reed J."/>
            <person name="Reid J.F."/>
            <person name="Ring B.Z."/>
            <person name="Ringwald M."/>
            <person name="Rost B."/>
            <person name="Ruan Y."/>
            <person name="Salzberg S.L."/>
            <person name="Sandelin A."/>
            <person name="Schneider C."/>
            <person name="Schoenbach C."/>
            <person name="Sekiguchi K."/>
            <person name="Semple C.A."/>
            <person name="Seno S."/>
            <person name="Sessa L."/>
            <person name="Sheng Y."/>
            <person name="Shibata Y."/>
            <person name="Shimada H."/>
            <person name="Shimada K."/>
            <person name="Silva D."/>
            <person name="Sinclair B."/>
            <person name="Sperling S."/>
            <person name="Stupka E."/>
            <person name="Sugiura K."/>
            <person name="Sultana R."/>
            <person name="Takenaka Y."/>
            <person name="Taki K."/>
            <person name="Tammoja K."/>
            <person name="Tan S.L."/>
            <person name="Tang S."/>
            <person name="Taylor M.S."/>
            <person name="Tegner J."/>
            <person name="Teichmann S.A."/>
            <person name="Ueda H.R."/>
            <person name="van Nimwegen E."/>
            <person name="Verardo R."/>
            <person name="Wei C.L."/>
            <person name="Yagi K."/>
            <person name="Yamanishi H."/>
            <person name="Zabarovsky E."/>
            <person name="Zhu S."/>
            <person name="Zimmer A."/>
            <person name="Hide W."/>
            <person name="Bult C."/>
            <person name="Grimmond S.M."/>
            <person name="Teasdale R.D."/>
            <person name="Liu E.T."/>
            <person name="Brusic V."/>
            <person name="Quackenbush J."/>
            <person name="Wahlestedt C."/>
            <person name="Mattick J.S."/>
            <person name="Hume D.A."/>
            <person name="Kai C."/>
            <person name="Sasaki D."/>
            <person name="Tomaru Y."/>
            <person name="Fukuda S."/>
            <person name="Kanamori-Katayama M."/>
            <person name="Suzuki M."/>
            <person name="Aoki J."/>
            <person name="Arakawa T."/>
            <person name="Iida J."/>
            <person name="Imamura K."/>
            <person name="Itoh M."/>
            <person name="Kato T."/>
            <person name="Kawaji H."/>
            <person name="Kawagashira N."/>
            <person name="Kawashima T."/>
            <person name="Kojima M."/>
            <person name="Kondo S."/>
            <person name="Konno H."/>
            <person name="Nakano K."/>
            <person name="Ninomiya N."/>
            <person name="Nishio T."/>
            <person name="Okada M."/>
            <person name="Plessy C."/>
            <person name="Shibata K."/>
            <person name="Shiraki T."/>
            <person name="Suzuki S."/>
            <person name="Tagami M."/>
            <person name="Waki K."/>
            <person name="Watahiki A."/>
            <person name="Okamura-Oho Y."/>
            <person name="Suzuki H."/>
            <person name="Kawai J."/>
            <person name="Hayashizaki Y."/>
        </authorList>
    </citation>
    <scope>NUCLEOTIDE SEQUENCE [LARGE SCALE MRNA]</scope>
    <source>
        <strain>C57BL/6J</strain>
    </source>
</reference>
<reference key="4">
    <citation type="journal article" date="1989" name="Development">
        <title>The mouse Hox-1.4 gene: primary structure, evidence for promoter activity and expression during development.</title>
        <authorList>
            <person name="Galliot B."/>
            <person name="Dolle P."/>
            <person name="Vigneron M."/>
            <person name="Featherstone M.S."/>
            <person name="Baron A."/>
            <person name="Duboule D."/>
        </authorList>
    </citation>
    <scope>NUCLEOTIDE SEQUENCE [GENOMIC DNA] OF 1-170</scope>
</reference>
<reference key="5">
    <citation type="journal article" date="1991" name="DNA Seq.">
        <title>Murine embryonic spinal cord and adult testis Hox-1.4 cDNAs are identical 3' to the homeo box.</title>
        <authorList>
            <person name="Rubin M.R."/>
            <person name="Nguyen-Huu M.C."/>
        </authorList>
    </citation>
    <scope>NUCLEOTIDE SEQUENCE [GENOMIC DNA] OF 171-199</scope>
    <scope>NUCLEOTIDE SEQUENCE [MRNA] OF 180-285</scope>
    <source>
        <strain>ICR</strain>
        <tissue>Spinal cord</tissue>
        <tissue>Testis</tissue>
    </source>
</reference>
<reference key="6">
    <citation type="journal article" date="1987" name="Ann. N. Y. Acad. Sci.">
        <title>Differential expression of the c-abl proto-oncogene and the homeo box-containing gene Hox 1.4 during mouse spermatogenesis.</title>
        <authorList>
            <person name="Duggal R.N."/>
            <person name="Zakeri Z.F."/>
            <person name="Ponzetto C."/>
            <person name="Wolgemuth D.J."/>
        </authorList>
    </citation>
    <scope>NUCLEOTIDE SEQUENCE [MRNA] OF 180-285</scope>
</reference>
<reference key="7">
    <citation type="journal article" date="1986" name="Science">
        <title>A mouse homeo box gene is expressed in spermatocytes and embryos.</title>
        <authorList>
            <person name="Rubin M.R."/>
            <person name="Toth L.E."/>
            <person name="Patel M.D."/>
            <person name="D'Eustachio P."/>
            <person name="Nguyen-Huu M.C."/>
        </authorList>
    </citation>
    <scope>NUCLEOTIDE SEQUENCE [MRNA] OF 180-273</scope>
</reference>
<reference key="8">
    <citation type="journal article" date="1986" name="EMBO J.">
        <title>Isolation of a mouse cDNA coding for a developmentally regulated, testis-specific transcript containing homeo box homology.</title>
        <authorList>
            <person name="Wolgemuth D.J."/>
            <person name="Engelmyer E."/>
            <person name="Duggal R.N."/>
            <person name="Gizang-Ginsberg E."/>
            <person name="Mutter G.L."/>
            <person name="Ponzetto C."/>
            <person name="Viviano C."/>
            <person name="Zakeri Z.F."/>
        </authorList>
    </citation>
    <scope>NUCLEOTIDE SEQUENCE [MRNA] OF 198-271</scope>
</reference>
<reference key="9">
    <citation type="journal article" date="1989" name="Nature">
        <title>Transgenic mice overexpressing the mouse homoeobox-containing gene Hox-1.4 exhibit abnormal gut development.</title>
        <authorList>
            <person name="Wolgemuth D.J."/>
            <person name="Behringer R.R."/>
            <person name="Mostoller M.P."/>
            <person name="Brinster R.L."/>
            <person name="Palmiter R.D."/>
        </authorList>
    </citation>
    <scope>RESULTS OF OVEREXPRESSION</scope>
</reference>
<feature type="chain" id="PRO_0000200049" description="Homeobox protein Hox-A4">
    <location>
        <begin position="1"/>
        <end position="285"/>
    </location>
</feature>
<feature type="DNA-binding region" description="Homeobox" evidence="1">
    <location>
        <begin position="180"/>
        <end position="239"/>
    </location>
</feature>
<feature type="region of interest" description="Disordered" evidence="2">
    <location>
        <begin position="19"/>
        <end position="70"/>
    </location>
</feature>
<feature type="region of interest" description="Disordered" evidence="2">
    <location>
        <begin position="94"/>
        <end position="130"/>
    </location>
</feature>
<feature type="region of interest" description="Disordered" evidence="2">
    <location>
        <begin position="238"/>
        <end position="285"/>
    </location>
</feature>
<feature type="short sequence motif" description="Antp-type hexapeptide">
    <location>
        <begin position="159"/>
        <end position="164"/>
    </location>
</feature>
<feature type="compositionally biased region" description="Gly residues" evidence="2">
    <location>
        <begin position="27"/>
        <end position="41"/>
    </location>
</feature>
<feature type="compositionally biased region" description="Low complexity" evidence="2">
    <location>
        <begin position="44"/>
        <end position="70"/>
    </location>
</feature>
<feature type="compositionally biased region" description="Pro residues" evidence="2">
    <location>
        <begin position="106"/>
        <end position="118"/>
    </location>
</feature>
<feature type="sequence conflict" description="In Ref. 3; BAC36181 and 4; CAA47330." evidence="3" ref="3 4">
    <original>G</original>
    <variation>A</variation>
    <location>
        <position position="97"/>
    </location>
</feature>
<feature type="sequence conflict" description="In Ref. 3; BAC36181." evidence="3" ref="3">
    <original>VPLG</original>
    <variation>APPR</variation>
    <location>
        <begin position="117"/>
        <end position="120"/>
    </location>
</feature>
<feature type="sequence conflict" description="In Ref. 5; CAA35228 and 7; AAA37831." evidence="3" ref="5 7">
    <original>K</original>
    <variation>E</variation>
    <location>
        <position position="181"/>
    </location>
</feature>
<feature type="sequence conflict" description="In Ref. 7; AAA37831." evidence="3" ref="7">
    <location>
        <position position="210"/>
    </location>
</feature>
<feature type="sequence conflict" description="In Ref. 1, 2 and 3; BAC36181." evidence="3" ref="1 2 3">
    <original>H</original>
    <variation>P</variation>
    <location>
        <position position="269"/>
    </location>
</feature>
<feature type="sequence conflict" description="In Ref. 7." evidence="3" ref="7">
    <original>HP</original>
    <variation>PE</variation>
    <location>
        <begin position="272"/>
        <end position="273"/>
    </location>
</feature>
<feature type="sequence conflict" description="In Ref. 5; CAA31889." evidence="3" ref="5">
    <original>TPIPSSI</original>
    <variation>HPFPPPYNLETWISFSHLCALLISAPVLICSSLSKPETPKQNPTCWKP</variation>
    <location>
        <begin position="279"/>
        <end position="285"/>
    </location>
</feature>
<proteinExistence type="evidence at transcript level"/>
<dbReference type="EMBL" id="S70444">
    <property type="protein sequence ID" value="AAB30705.2"/>
    <property type="molecule type" value="Genomic_DNA"/>
</dbReference>
<dbReference type="EMBL" id="S67058">
    <property type="protein sequence ID" value="AAB28662.2"/>
    <property type="molecule type" value="Genomic_DNA"/>
</dbReference>
<dbReference type="EMBL" id="AK076098">
    <property type="protein sequence ID" value="BAC36181.1"/>
    <property type="molecule type" value="mRNA"/>
</dbReference>
<dbReference type="EMBL" id="X66861">
    <property type="protein sequence ID" value="CAA47330.1"/>
    <property type="molecule type" value="Genomic_DNA"/>
</dbReference>
<dbReference type="EMBL" id="X13538">
    <property type="protein sequence ID" value="CAA31889.1"/>
    <property type="molecule type" value="mRNA"/>
</dbReference>
<dbReference type="EMBL" id="X17346">
    <property type="protein sequence ID" value="CAA35228.1"/>
    <property type="molecule type" value="Genomic_DNA"/>
</dbReference>
<dbReference type="EMBL" id="M27432">
    <property type="protein sequence ID" value="AAA16440.1"/>
    <property type="molecule type" value="mRNA"/>
</dbReference>
<dbReference type="EMBL" id="M13813">
    <property type="protein sequence ID" value="AAA37831.1"/>
    <property type="molecule type" value="mRNA"/>
</dbReference>
<dbReference type="CCDS" id="CCDS20142.1"/>
<dbReference type="PIR" id="A43556">
    <property type="entry name" value="A43556"/>
</dbReference>
<dbReference type="RefSeq" id="NP_032291.1">
    <property type="nucleotide sequence ID" value="NM_008265.3"/>
</dbReference>
<dbReference type="SMR" id="P06798"/>
<dbReference type="BioGRID" id="200369">
    <property type="interactions" value="9"/>
</dbReference>
<dbReference type="FunCoup" id="P06798">
    <property type="interactions" value="925"/>
</dbReference>
<dbReference type="IntAct" id="P06798">
    <property type="interactions" value="1"/>
</dbReference>
<dbReference type="STRING" id="10090.ENSMUSP00000098943"/>
<dbReference type="GlyGen" id="P06798">
    <property type="glycosylation" value="1 site"/>
</dbReference>
<dbReference type="iPTMnet" id="P06798"/>
<dbReference type="PhosphoSitePlus" id="P06798"/>
<dbReference type="PaxDb" id="10090-ENSMUSP00000098943"/>
<dbReference type="PeptideAtlas" id="P06798"/>
<dbReference type="ProteomicsDB" id="273327"/>
<dbReference type="DNASU" id="15401"/>
<dbReference type="GeneID" id="15401"/>
<dbReference type="KEGG" id="mmu:15401"/>
<dbReference type="UCSC" id="uc009byf.1">
    <property type="organism name" value="mouse"/>
</dbReference>
<dbReference type="AGR" id="MGI:96176"/>
<dbReference type="CTD" id="3201"/>
<dbReference type="MGI" id="MGI:96176">
    <property type="gene designation" value="Hoxa4"/>
</dbReference>
<dbReference type="eggNOG" id="KOG0489">
    <property type="taxonomic scope" value="Eukaryota"/>
</dbReference>
<dbReference type="InParanoid" id="P06798"/>
<dbReference type="OrthoDB" id="6159439at2759"/>
<dbReference type="PhylomeDB" id="P06798"/>
<dbReference type="TreeFam" id="TF352857"/>
<dbReference type="BioGRID-ORCS" id="15401">
    <property type="hits" value="7 hits in 79 CRISPR screens"/>
</dbReference>
<dbReference type="PRO" id="PR:P06798"/>
<dbReference type="Proteomes" id="UP000000589">
    <property type="component" value="Unplaced"/>
</dbReference>
<dbReference type="RNAct" id="P06798">
    <property type="molecule type" value="protein"/>
</dbReference>
<dbReference type="GO" id="GO:0005654">
    <property type="term" value="C:nucleoplasm"/>
    <property type="evidence" value="ECO:0000304"/>
    <property type="project" value="Reactome"/>
</dbReference>
<dbReference type="GO" id="GO:0003677">
    <property type="term" value="F:DNA binding"/>
    <property type="evidence" value="ECO:0000304"/>
    <property type="project" value="MGI"/>
</dbReference>
<dbReference type="GO" id="GO:0000981">
    <property type="term" value="F:DNA-binding transcription factor activity, RNA polymerase II-specific"/>
    <property type="evidence" value="ECO:0007669"/>
    <property type="project" value="InterPro"/>
</dbReference>
<dbReference type="GO" id="GO:0009952">
    <property type="term" value="P:anterior/posterior pattern specification"/>
    <property type="evidence" value="ECO:0000315"/>
    <property type="project" value="MGI"/>
</dbReference>
<dbReference type="GO" id="GO:0048704">
    <property type="term" value="P:embryonic skeletal system morphogenesis"/>
    <property type="evidence" value="ECO:0000315"/>
    <property type="project" value="MGI"/>
</dbReference>
<dbReference type="CDD" id="cd00086">
    <property type="entry name" value="homeodomain"/>
    <property type="match status" value="1"/>
</dbReference>
<dbReference type="FunFam" id="1.10.10.60:FF:000029">
    <property type="entry name" value="Homeobox protein Hox-D4"/>
    <property type="match status" value="1"/>
</dbReference>
<dbReference type="Gene3D" id="1.10.10.60">
    <property type="entry name" value="Homeodomain-like"/>
    <property type="match status" value="1"/>
</dbReference>
<dbReference type="InterPro" id="IPR050609">
    <property type="entry name" value="Antp_homeobox_Deformed_sf"/>
</dbReference>
<dbReference type="InterPro" id="IPR001356">
    <property type="entry name" value="HD"/>
</dbReference>
<dbReference type="InterPro" id="IPR020479">
    <property type="entry name" value="HD_metazoa"/>
</dbReference>
<dbReference type="InterPro" id="IPR017995">
    <property type="entry name" value="Homeobox_antennapedia"/>
</dbReference>
<dbReference type="InterPro" id="IPR001827">
    <property type="entry name" value="Homeobox_Antennapedia_CS"/>
</dbReference>
<dbReference type="InterPro" id="IPR017970">
    <property type="entry name" value="Homeobox_CS"/>
</dbReference>
<dbReference type="InterPro" id="IPR009057">
    <property type="entry name" value="Homeodomain-like_sf"/>
</dbReference>
<dbReference type="PANTHER" id="PTHR45771:SF2">
    <property type="entry name" value="HOMEOBOX PROTEIN HOX-A4"/>
    <property type="match status" value="1"/>
</dbReference>
<dbReference type="PANTHER" id="PTHR45771">
    <property type="entry name" value="HOMEOTIC PROTEIN DEFORMED"/>
    <property type="match status" value="1"/>
</dbReference>
<dbReference type="Pfam" id="PF00046">
    <property type="entry name" value="Homeodomain"/>
    <property type="match status" value="1"/>
</dbReference>
<dbReference type="PRINTS" id="PR00025">
    <property type="entry name" value="ANTENNAPEDIA"/>
</dbReference>
<dbReference type="PRINTS" id="PR00024">
    <property type="entry name" value="HOMEOBOX"/>
</dbReference>
<dbReference type="SMART" id="SM00389">
    <property type="entry name" value="HOX"/>
    <property type="match status" value="1"/>
</dbReference>
<dbReference type="SUPFAM" id="SSF46689">
    <property type="entry name" value="Homeodomain-like"/>
    <property type="match status" value="1"/>
</dbReference>
<dbReference type="PROSITE" id="PS00032">
    <property type="entry name" value="ANTENNAPEDIA"/>
    <property type="match status" value="1"/>
</dbReference>
<dbReference type="PROSITE" id="PS00027">
    <property type="entry name" value="HOMEOBOX_1"/>
    <property type="match status" value="1"/>
</dbReference>
<dbReference type="PROSITE" id="PS50071">
    <property type="entry name" value="HOMEOBOX_2"/>
    <property type="match status" value="1"/>
</dbReference>
<comment type="function">
    <text>Sequence-specific transcription factor which is part of a developmental regulatory system that provides cells with specific positional identities on the anterior-posterior axis. Binds to sites in the 5'-flanking sequence of its coding region with various affinities. The consensus sequences of the high and low affinity binding sites are 5'-TAATGA[CG]-3' and 5'-CTAATTTT-3'.</text>
</comment>
<comment type="subcellular location">
    <subcellularLocation>
        <location>Nucleus</location>
    </subcellularLocation>
</comment>
<comment type="developmental stage">
    <text>During development of the prepuberal testis high levels of HOXA4 transcripts were found at days 17, 24 and 30. The first day of HOXA4 expression was day 14. The activation of the HOXA4 gene in male germ cells seems to occur at the pachytene stage of meiotic prophase and its level of expression is stage-specific during embryogenesis.</text>
</comment>
<comment type="disease">
    <text>Overexpression results in abnormal gut development (megacolon).</text>
</comment>
<comment type="similarity">
    <text evidence="3">Belongs to the Antp homeobox family. Deformed subfamily.</text>
</comment>
<accession>P06798</accession>
<accession>Q61684</accession>
<accession>Q64388</accession>
<accession>Q8BPE6</accession>
<evidence type="ECO:0000255" key="1">
    <source>
        <dbReference type="PROSITE-ProRule" id="PRU00108"/>
    </source>
</evidence>
<evidence type="ECO:0000256" key="2">
    <source>
        <dbReference type="SAM" id="MobiDB-lite"/>
    </source>
</evidence>
<evidence type="ECO:0000305" key="3"/>
<name>HXA4_MOUSE</name>
<keyword id="KW-0217">Developmental protein</keyword>
<keyword id="KW-0238">DNA-binding</keyword>
<keyword id="KW-0371">Homeobox</keyword>
<keyword id="KW-0539">Nucleus</keyword>
<keyword id="KW-1185">Reference proteome</keyword>
<keyword id="KW-0804">Transcription</keyword>
<keyword id="KW-0805">Transcription regulation</keyword>